<comment type="function">
    <text evidence="1">Responsible for synthesis of pseudouridine from uracil-13 in transfer RNAs.</text>
</comment>
<comment type="catalytic activity">
    <reaction evidence="1">
        <text>uridine(13) in tRNA = pseudouridine(13) in tRNA</text>
        <dbReference type="Rhea" id="RHEA:42540"/>
        <dbReference type="Rhea" id="RHEA-COMP:10105"/>
        <dbReference type="Rhea" id="RHEA-COMP:10106"/>
        <dbReference type="ChEBI" id="CHEBI:65314"/>
        <dbReference type="ChEBI" id="CHEBI:65315"/>
        <dbReference type="EC" id="5.4.99.27"/>
    </reaction>
</comment>
<comment type="similarity">
    <text evidence="1">Belongs to the pseudouridine synthase TruD family.</text>
</comment>
<feature type="chain" id="PRO_0000152493" description="tRNA pseudouridine synthase D">
    <location>
        <begin position="1"/>
        <end position="372"/>
    </location>
</feature>
<feature type="domain" description="TRUD" evidence="1">
    <location>
        <begin position="160"/>
        <end position="330"/>
    </location>
</feature>
<feature type="active site" description="Nucleophile" evidence="1">
    <location>
        <position position="85"/>
    </location>
</feature>
<protein>
    <recommendedName>
        <fullName evidence="1">tRNA pseudouridine synthase D</fullName>
        <ecNumber evidence="1">5.4.99.27</ecNumber>
    </recommendedName>
    <alternativeName>
        <fullName evidence="1">tRNA pseudouridine(13) synthase</fullName>
    </alternativeName>
    <alternativeName>
        <fullName evidence="1">tRNA pseudouridylate synthase D</fullName>
    </alternativeName>
    <alternativeName>
        <fullName evidence="1">tRNA-uridine isomerase D</fullName>
    </alternativeName>
</protein>
<gene>
    <name evidence="1" type="primary">truD</name>
    <name type="ordered locus">CJE1631</name>
</gene>
<dbReference type="EC" id="5.4.99.27" evidence="1"/>
<dbReference type="EMBL" id="CP000025">
    <property type="protein sequence ID" value="AAW36064.1"/>
    <property type="molecule type" value="Genomic_DNA"/>
</dbReference>
<dbReference type="RefSeq" id="WP_002867255.1">
    <property type="nucleotide sequence ID" value="NC_003912.7"/>
</dbReference>
<dbReference type="SMR" id="Q5HSX3"/>
<dbReference type="KEGG" id="cjr:CJE1631"/>
<dbReference type="HOGENOM" id="CLU_005281_4_0_7"/>
<dbReference type="GO" id="GO:0005829">
    <property type="term" value="C:cytosol"/>
    <property type="evidence" value="ECO:0007669"/>
    <property type="project" value="TreeGrafter"/>
</dbReference>
<dbReference type="GO" id="GO:0003723">
    <property type="term" value="F:RNA binding"/>
    <property type="evidence" value="ECO:0007669"/>
    <property type="project" value="InterPro"/>
</dbReference>
<dbReference type="GO" id="GO:0160150">
    <property type="term" value="F:tRNA pseudouridine(13) synthase activity"/>
    <property type="evidence" value="ECO:0007669"/>
    <property type="project" value="UniProtKB-EC"/>
</dbReference>
<dbReference type="GO" id="GO:0031119">
    <property type="term" value="P:tRNA pseudouridine synthesis"/>
    <property type="evidence" value="ECO:0007669"/>
    <property type="project" value="UniProtKB-UniRule"/>
</dbReference>
<dbReference type="CDD" id="cd02575">
    <property type="entry name" value="PseudoU_synth_EcTruD"/>
    <property type="match status" value="1"/>
</dbReference>
<dbReference type="FunFam" id="3.30.2340.10:FF:000002">
    <property type="entry name" value="tRNA pseudouridine synthase D"/>
    <property type="match status" value="1"/>
</dbReference>
<dbReference type="FunFam" id="3.30.2350.20:FF:000008">
    <property type="entry name" value="tRNA pseudouridine synthase D"/>
    <property type="match status" value="1"/>
</dbReference>
<dbReference type="Gene3D" id="3.30.2350.20">
    <property type="entry name" value="TruD, catalytic domain"/>
    <property type="match status" value="1"/>
</dbReference>
<dbReference type="HAMAP" id="MF_01082">
    <property type="entry name" value="TruD"/>
    <property type="match status" value="1"/>
</dbReference>
<dbReference type="InterPro" id="IPR020103">
    <property type="entry name" value="PsdUridine_synth_cat_dom_sf"/>
</dbReference>
<dbReference type="InterPro" id="IPR001656">
    <property type="entry name" value="PsdUridine_synth_TruD"/>
</dbReference>
<dbReference type="InterPro" id="IPR020119">
    <property type="entry name" value="PsdUridine_synth_TruD_CS"/>
</dbReference>
<dbReference type="InterPro" id="IPR011760">
    <property type="entry name" value="PsdUridine_synth_TruD_insert"/>
</dbReference>
<dbReference type="InterPro" id="IPR042214">
    <property type="entry name" value="TruD_catalytic"/>
</dbReference>
<dbReference type="InterPro" id="IPR050170">
    <property type="entry name" value="TruD_pseudoU_synthase"/>
</dbReference>
<dbReference type="NCBIfam" id="NF002154">
    <property type="entry name" value="PRK00984.1-3"/>
    <property type="match status" value="1"/>
</dbReference>
<dbReference type="NCBIfam" id="TIGR00094">
    <property type="entry name" value="tRNA_TruD_broad"/>
    <property type="match status" value="1"/>
</dbReference>
<dbReference type="PANTHER" id="PTHR47811">
    <property type="entry name" value="TRNA PSEUDOURIDINE SYNTHASE D"/>
    <property type="match status" value="1"/>
</dbReference>
<dbReference type="PANTHER" id="PTHR47811:SF1">
    <property type="entry name" value="TRNA PSEUDOURIDINE SYNTHASE D"/>
    <property type="match status" value="1"/>
</dbReference>
<dbReference type="Pfam" id="PF01142">
    <property type="entry name" value="TruD"/>
    <property type="match status" value="2"/>
</dbReference>
<dbReference type="SUPFAM" id="SSF55120">
    <property type="entry name" value="Pseudouridine synthase"/>
    <property type="match status" value="1"/>
</dbReference>
<dbReference type="PROSITE" id="PS50984">
    <property type="entry name" value="TRUD"/>
    <property type="match status" value="1"/>
</dbReference>
<dbReference type="PROSITE" id="PS01268">
    <property type="entry name" value="UPF0024"/>
    <property type="match status" value="1"/>
</dbReference>
<proteinExistence type="inferred from homology"/>
<evidence type="ECO:0000255" key="1">
    <source>
        <dbReference type="HAMAP-Rule" id="MF_01082"/>
    </source>
</evidence>
<organism>
    <name type="scientific">Campylobacter jejuni (strain RM1221)</name>
    <dbReference type="NCBI Taxonomy" id="195099"/>
    <lineage>
        <taxon>Bacteria</taxon>
        <taxon>Pseudomonadati</taxon>
        <taxon>Campylobacterota</taxon>
        <taxon>Epsilonproteobacteria</taxon>
        <taxon>Campylobacterales</taxon>
        <taxon>Campylobacteraceae</taxon>
        <taxon>Campylobacter</taxon>
    </lineage>
</organism>
<sequence>MNLEEENTIFKPLYSLKHSPINAYFSKNSDDFVVRERPLYEFSGKGEHLILHINKKDLTTNEALKILSETSGVKIRDFGYAGFKDKQGSTFQYLSMPKKFESFLSNFSHPKLKILETFIHENKLRIGHLKGNTFFIRLKKVLPSDALKLEQALMNLDKQGFTNYFGYQRFGKFGDNYKEGLEILRGKKMKNVKMKEFLISAFQSELFNRYLSKRVELSHFANDFSEKELIQIYKISKEEAKELKKQEQFFKLLKGEVLGHYPFGKCFLCEDLSAELGRFKARDISAMGLLIGAKAYETGEGLALNLENEIFKDTLEFKAKMQGSRRFMWGYLEELKWRYDEEKAHFCIEFFLQKGSYATVVLEEILHKNLFE</sequence>
<accession>Q5HSX3</accession>
<name>TRUD_CAMJR</name>
<reference key="1">
    <citation type="journal article" date="2005" name="PLoS Biol.">
        <title>Major structural differences and novel potential virulence mechanisms from the genomes of multiple Campylobacter species.</title>
        <authorList>
            <person name="Fouts D.E."/>
            <person name="Mongodin E.F."/>
            <person name="Mandrell R.E."/>
            <person name="Miller W.G."/>
            <person name="Rasko D.A."/>
            <person name="Ravel J."/>
            <person name="Brinkac L.M."/>
            <person name="DeBoy R.T."/>
            <person name="Parker C.T."/>
            <person name="Daugherty S.C."/>
            <person name="Dodson R.J."/>
            <person name="Durkin A.S."/>
            <person name="Madupu R."/>
            <person name="Sullivan S.A."/>
            <person name="Shetty J.U."/>
            <person name="Ayodeji M.A."/>
            <person name="Shvartsbeyn A."/>
            <person name="Schatz M.C."/>
            <person name="Badger J.H."/>
            <person name="Fraser C.M."/>
            <person name="Nelson K.E."/>
        </authorList>
    </citation>
    <scope>NUCLEOTIDE SEQUENCE [LARGE SCALE GENOMIC DNA]</scope>
    <source>
        <strain>RM1221</strain>
    </source>
</reference>
<keyword id="KW-0413">Isomerase</keyword>
<keyword id="KW-0819">tRNA processing</keyword>